<proteinExistence type="inferred from homology"/>
<feature type="chain" id="PRO_1000091010" description="Aspartate--tRNA ligase">
    <location>
        <begin position="1"/>
        <end position="589"/>
    </location>
</feature>
<feature type="region of interest" description="Aspartate" evidence="1">
    <location>
        <begin position="198"/>
        <end position="201"/>
    </location>
</feature>
<feature type="binding site" evidence="1">
    <location>
        <position position="174"/>
    </location>
    <ligand>
        <name>L-aspartate</name>
        <dbReference type="ChEBI" id="CHEBI:29991"/>
    </ligand>
</feature>
<feature type="binding site" evidence="1">
    <location>
        <begin position="220"/>
        <end position="222"/>
    </location>
    <ligand>
        <name>ATP</name>
        <dbReference type="ChEBI" id="CHEBI:30616"/>
    </ligand>
</feature>
<feature type="binding site" evidence="1">
    <location>
        <position position="220"/>
    </location>
    <ligand>
        <name>L-aspartate</name>
        <dbReference type="ChEBI" id="CHEBI:29991"/>
    </ligand>
</feature>
<feature type="binding site" evidence="1">
    <location>
        <position position="229"/>
    </location>
    <ligand>
        <name>ATP</name>
        <dbReference type="ChEBI" id="CHEBI:30616"/>
    </ligand>
</feature>
<feature type="binding site" evidence="1">
    <location>
        <position position="448"/>
    </location>
    <ligand>
        <name>L-aspartate</name>
        <dbReference type="ChEBI" id="CHEBI:29991"/>
    </ligand>
</feature>
<feature type="binding site" evidence="1">
    <location>
        <position position="484"/>
    </location>
    <ligand>
        <name>ATP</name>
        <dbReference type="ChEBI" id="CHEBI:30616"/>
    </ligand>
</feature>
<feature type="binding site" evidence="1">
    <location>
        <position position="491"/>
    </location>
    <ligand>
        <name>L-aspartate</name>
        <dbReference type="ChEBI" id="CHEBI:29991"/>
    </ligand>
</feature>
<feature type="binding site" evidence="1">
    <location>
        <begin position="536"/>
        <end position="539"/>
    </location>
    <ligand>
        <name>ATP</name>
        <dbReference type="ChEBI" id="CHEBI:30616"/>
    </ligand>
</feature>
<reference key="1">
    <citation type="journal article" date="2008" name="J. Bacteriol.">
        <title>Complete genome sequence of Leuconostoc citreum KM20.</title>
        <authorList>
            <person name="Kim J.F."/>
            <person name="Jeong H."/>
            <person name="Lee J.-S."/>
            <person name="Choi S.-H."/>
            <person name="Ha M."/>
            <person name="Hur C.-G."/>
            <person name="Kim J.-S."/>
            <person name="Lee S."/>
            <person name="Park H.-S."/>
            <person name="Park Y.-H."/>
            <person name="Oh T.K."/>
        </authorList>
    </citation>
    <scope>NUCLEOTIDE SEQUENCE [LARGE SCALE GENOMIC DNA]</scope>
    <source>
        <strain>KM20</strain>
    </source>
</reference>
<keyword id="KW-0030">Aminoacyl-tRNA synthetase</keyword>
<keyword id="KW-0067">ATP-binding</keyword>
<keyword id="KW-0963">Cytoplasm</keyword>
<keyword id="KW-0436">Ligase</keyword>
<keyword id="KW-0547">Nucleotide-binding</keyword>
<keyword id="KW-0648">Protein biosynthesis</keyword>
<keyword id="KW-1185">Reference proteome</keyword>
<name>SYD_LEUCK</name>
<evidence type="ECO:0000255" key="1">
    <source>
        <dbReference type="HAMAP-Rule" id="MF_00044"/>
    </source>
</evidence>
<organism>
    <name type="scientific">Leuconostoc citreum (strain KM20)</name>
    <dbReference type="NCBI Taxonomy" id="349519"/>
    <lineage>
        <taxon>Bacteria</taxon>
        <taxon>Bacillati</taxon>
        <taxon>Bacillota</taxon>
        <taxon>Bacilli</taxon>
        <taxon>Lactobacillales</taxon>
        <taxon>Lactobacillaceae</taxon>
        <taxon>Leuconostoc</taxon>
    </lineage>
</organism>
<sequence length="589" mass="66595">MKRTTYAGLVDEKYLNQTVTLSGWVQKRRDFGDLIFVDLRDREGIVQLTFNATHAEALAVAENMRNEYVISVTGQVVRREASQINNKIHSGQIEIDVIEAEILATSKTPPFYIEDNVNANEELKLQYRYLDLRRPEMQKNLRIRSKIMSSAMHFMDQNDFINIETPILAKSTPEGARDYLVPSRIFPGSFYALPQSPQLFKQLLMGSGFDRYFQIARAFRDEDLRGDRQPEFTQMDVETSFMSADEIRELVNAWVKAMMSDVVNFDLDTTKIPTLTWQESMDRFGTDKPDLRIAYELKDVSETVKSSEFGVFAKAVEAGGVVKAIAVPGGAENYSRKDIDKMAQYIERFGAKGLAWLKVTDEGISGPIAKFFPNHAALLQVTGAKPGDLLLFGAGRNDIVAATLDYLRRQTAKDLNLIDMTNPWAFAWIVDWPLFEYSEDFDRWIAAHHPFTMPNEEDLHYLDDGEDPHQAHAQSYDLVLNGYELGSGSIRIHRMDIQEKMLKALGFTPEAAHEAFGFLLEGMTFGFPPMGGIALGLDRLAMLLAGQENIREVIAFPKNSRATEPMTQAPTRVDHKQVNDLGLFVSDVE</sequence>
<protein>
    <recommendedName>
        <fullName evidence="1">Aspartate--tRNA ligase</fullName>
        <ecNumber evidence="1">6.1.1.12</ecNumber>
    </recommendedName>
    <alternativeName>
        <fullName evidence="1">Aspartyl-tRNA synthetase</fullName>
        <shortName evidence="1">AspRS</shortName>
    </alternativeName>
</protein>
<accession>B1MY98</accession>
<gene>
    <name evidence="1" type="primary">aspS</name>
    <name type="ordered locus">LCK_00668</name>
</gene>
<dbReference type="EC" id="6.1.1.12" evidence="1"/>
<dbReference type="EMBL" id="DQ489736">
    <property type="protein sequence ID" value="ACA82500.1"/>
    <property type="molecule type" value="Genomic_DNA"/>
</dbReference>
<dbReference type="RefSeq" id="WP_004907210.1">
    <property type="nucleotide sequence ID" value="NC_010471.1"/>
</dbReference>
<dbReference type="SMR" id="B1MY98"/>
<dbReference type="STRING" id="349519.LCK_00668"/>
<dbReference type="KEGG" id="lci:LCK_00668"/>
<dbReference type="eggNOG" id="COG0173">
    <property type="taxonomic scope" value="Bacteria"/>
</dbReference>
<dbReference type="HOGENOM" id="CLU_014330_3_2_9"/>
<dbReference type="OrthoDB" id="9802326at2"/>
<dbReference type="Proteomes" id="UP000002166">
    <property type="component" value="Chromosome"/>
</dbReference>
<dbReference type="GO" id="GO:0005737">
    <property type="term" value="C:cytoplasm"/>
    <property type="evidence" value="ECO:0007669"/>
    <property type="project" value="UniProtKB-SubCell"/>
</dbReference>
<dbReference type="GO" id="GO:0004815">
    <property type="term" value="F:aspartate-tRNA ligase activity"/>
    <property type="evidence" value="ECO:0007669"/>
    <property type="project" value="UniProtKB-UniRule"/>
</dbReference>
<dbReference type="GO" id="GO:0005524">
    <property type="term" value="F:ATP binding"/>
    <property type="evidence" value="ECO:0007669"/>
    <property type="project" value="UniProtKB-UniRule"/>
</dbReference>
<dbReference type="GO" id="GO:0140096">
    <property type="term" value="F:catalytic activity, acting on a protein"/>
    <property type="evidence" value="ECO:0007669"/>
    <property type="project" value="UniProtKB-ARBA"/>
</dbReference>
<dbReference type="GO" id="GO:0003676">
    <property type="term" value="F:nucleic acid binding"/>
    <property type="evidence" value="ECO:0007669"/>
    <property type="project" value="InterPro"/>
</dbReference>
<dbReference type="GO" id="GO:0016740">
    <property type="term" value="F:transferase activity"/>
    <property type="evidence" value="ECO:0007669"/>
    <property type="project" value="UniProtKB-ARBA"/>
</dbReference>
<dbReference type="GO" id="GO:0006422">
    <property type="term" value="P:aspartyl-tRNA aminoacylation"/>
    <property type="evidence" value="ECO:0007669"/>
    <property type="project" value="UniProtKB-UniRule"/>
</dbReference>
<dbReference type="CDD" id="cd00777">
    <property type="entry name" value="AspRS_core"/>
    <property type="match status" value="1"/>
</dbReference>
<dbReference type="CDD" id="cd04317">
    <property type="entry name" value="EcAspRS_like_N"/>
    <property type="match status" value="1"/>
</dbReference>
<dbReference type="Gene3D" id="3.30.930.10">
    <property type="entry name" value="Bira Bifunctional Protein, Domain 2"/>
    <property type="match status" value="1"/>
</dbReference>
<dbReference type="Gene3D" id="3.30.1360.30">
    <property type="entry name" value="GAD-like domain"/>
    <property type="match status" value="1"/>
</dbReference>
<dbReference type="Gene3D" id="2.40.50.140">
    <property type="entry name" value="Nucleic acid-binding proteins"/>
    <property type="match status" value="1"/>
</dbReference>
<dbReference type="HAMAP" id="MF_00044">
    <property type="entry name" value="Asp_tRNA_synth_type1"/>
    <property type="match status" value="1"/>
</dbReference>
<dbReference type="InterPro" id="IPR004364">
    <property type="entry name" value="Aa-tRNA-synt_II"/>
</dbReference>
<dbReference type="InterPro" id="IPR006195">
    <property type="entry name" value="aa-tRNA-synth_II"/>
</dbReference>
<dbReference type="InterPro" id="IPR045864">
    <property type="entry name" value="aa-tRNA-synth_II/BPL/LPL"/>
</dbReference>
<dbReference type="InterPro" id="IPR004524">
    <property type="entry name" value="Asp-tRNA-ligase_1"/>
</dbReference>
<dbReference type="InterPro" id="IPR047089">
    <property type="entry name" value="Asp-tRNA-ligase_1_N"/>
</dbReference>
<dbReference type="InterPro" id="IPR002312">
    <property type="entry name" value="Asp/Asn-tRNA-synth_IIb"/>
</dbReference>
<dbReference type="InterPro" id="IPR047090">
    <property type="entry name" value="AspRS_core"/>
</dbReference>
<dbReference type="InterPro" id="IPR004115">
    <property type="entry name" value="GAD-like_sf"/>
</dbReference>
<dbReference type="InterPro" id="IPR029351">
    <property type="entry name" value="GAD_dom"/>
</dbReference>
<dbReference type="InterPro" id="IPR012340">
    <property type="entry name" value="NA-bd_OB-fold"/>
</dbReference>
<dbReference type="InterPro" id="IPR004365">
    <property type="entry name" value="NA-bd_OB_tRNA"/>
</dbReference>
<dbReference type="NCBIfam" id="TIGR00459">
    <property type="entry name" value="aspS_bact"/>
    <property type="match status" value="1"/>
</dbReference>
<dbReference type="NCBIfam" id="NF001750">
    <property type="entry name" value="PRK00476.1"/>
    <property type="match status" value="1"/>
</dbReference>
<dbReference type="PANTHER" id="PTHR22594:SF5">
    <property type="entry name" value="ASPARTATE--TRNA LIGASE, MITOCHONDRIAL"/>
    <property type="match status" value="1"/>
</dbReference>
<dbReference type="PANTHER" id="PTHR22594">
    <property type="entry name" value="ASPARTYL/LYSYL-TRNA SYNTHETASE"/>
    <property type="match status" value="1"/>
</dbReference>
<dbReference type="Pfam" id="PF02938">
    <property type="entry name" value="GAD"/>
    <property type="match status" value="1"/>
</dbReference>
<dbReference type="Pfam" id="PF00152">
    <property type="entry name" value="tRNA-synt_2"/>
    <property type="match status" value="1"/>
</dbReference>
<dbReference type="Pfam" id="PF01336">
    <property type="entry name" value="tRNA_anti-codon"/>
    <property type="match status" value="1"/>
</dbReference>
<dbReference type="PRINTS" id="PR01042">
    <property type="entry name" value="TRNASYNTHASP"/>
</dbReference>
<dbReference type="SUPFAM" id="SSF55681">
    <property type="entry name" value="Class II aaRS and biotin synthetases"/>
    <property type="match status" value="1"/>
</dbReference>
<dbReference type="SUPFAM" id="SSF55261">
    <property type="entry name" value="GAD domain-like"/>
    <property type="match status" value="1"/>
</dbReference>
<dbReference type="SUPFAM" id="SSF50249">
    <property type="entry name" value="Nucleic acid-binding proteins"/>
    <property type="match status" value="1"/>
</dbReference>
<dbReference type="PROSITE" id="PS50862">
    <property type="entry name" value="AA_TRNA_LIGASE_II"/>
    <property type="match status" value="1"/>
</dbReference>
<comment type="function">
    <text evidence="1">Catalyzes the attachment of L-aspartate to tRNA(Asp) in a two-step reaction: L-aspartate is first activated by ATP to form Asp-AMP and then transferred to the acceptor end of tRNA(Asp).</text>
</comment>
<comment type="catalytic activity">
    <reaction evidence="1">
        <text>tRNA(Asp) + L-aspartate + ATP = L-aspartyl-tRNA(Asp) + AMP + diphosphate</text>
        <dbReference type="Rhea" id="RHEA:19649"/>
        <dbReference type="Rhea" id="RHEA-COMP:9660"/>
        <dbReference type="Rhea" id="RHEA-COMP:9678"/>
        <dbReference type="ChEBI" id="CHEBI:29991"/>
        <dbReference type="ChEBI" id="CHEBI:30616"/>
        <dbReference type="ChEBI" id="CHEBI:33019"/>
        <dbReference type="ChEBI" id="CHEBI:78442"/>
        <dbReference type="ChEBI" id="CHEBI:78516"/>
        <dbReference type="ChEBI" id="CHEBI:456215"/>
        <dbReference type="EC" id="6.1.1.12"/>
    </reaction>
</comment>
<comment type="subunit">
    <text evidence="1">Homodimer.</text>
</comment>
<comment type="subcellular location">
    <subcellularLocation>
        <location evidence="1">Cytoplasm</location>
    </subcellularLocation>
</comment>
<comment type="similarity">
    <text evidence="1">Belongs to the class-II aminoacyl-tRNA synthetase family. Type 1 subfamily.</text>
</comment>